<feature type="chain" id="PRO_0000455602" description="Zinc finger protein lsy-2">
    <location>
        <begin position="1"/>
        <end position="365"/>
    </location>
</feature>
<feature type="zinc finger region" description="C2H2-type 1" evidence="2">
    <location>
        <begin position="78"/>
        <end position="100"/>
    </location>
</feature>
<feature type="zinc finger region" description="C2H2-type 2" evidence="2">
    <location>
        <begin position="106"/>
        <end position="128"/>
    </location>
</feature>
<feature type="zinc finger region" description="C2H2-type 3" evidence="2">
    <location>
        <begin position="134"/>
        <end position="156"/>
    </location>
</feature>
<feature type="zinc finger region" description="C2H2-type 4" evidence="2">
    <location>
        <begin position="264"/>
        <end position="287"/>
    </location>
</feature>
<feature type="zinc finger region" description="C2H2-type 5" evidence="2">
    <location>
        <begin position="296"/>
        <end position="318"/>
    </location>
</feature>
<feature type="region of interest" description="Disordered" evidence="3">
    <location>
        <begin position="1"/>
        <end position="36"/>
    </location>
</feature>
<feature type="compositionally biased region" description="Polar residues" evidence="3">
    <location>
        <begin position="8"/>
        <end position="36"/>
    </location>
</feature>
<feature type="splice variant" id="VSP_061500" description="In isoform b.">
    <location>
        <begin position="1"/>
        <end position="26"/>
    </location>
</feature>
<feature type="mutagenesis site" description="In ot64; Abolishes expression of gcy-6, gcy-7, lim-6 and flp-4 in the ASEL gustatory neuron, and causes ectopic expression of gcy-5 and cog-1 in ASEL. Abolishes expression of microRNA gene lsy-6. Ectopic expression of pgl-1 and glh-1, forming perinuclear granules in various somatic cells. Protruding vulva, abnormally migrating gonad arms and sterility." evidence="4 5">
    <location>
        <begin position="95"/>
        <end position="365"/>
    </location>
</feature>
<feature type="mutagenesis site" description="In ot77; Causes ectopic expression of gcy-5 in ASEL gustatory neurons." evidence="4">
    <original>C</original>
    <variation>Y</variation>
    <location>
        <position position="111"/>
    </location>
</feature>
<protein>
    <recommendedName>
        <fullName evidence="6">Zinc finger protein lsy-2</fullName>
    </recommendedName>
    <alternativeName>
        <fullName evidence="8">Laterally symmetric 2</fullName>
    </alternativeName>
</protein>
<organism evidence="7">
    <name type="scientific">Caenorhabditis elegans</name>
    <dbReference type="NCBI Taxonomy" id="6239"/>
    <lineage>
        <taxon>Eukaryota</taxon>
        <taxon>Metazoa</taxon>
        <taxon>Ecdysozoa</taxon>
        <taxon>Nematoda</taxon>
        <taxon>Chromadorea</taxon>
        <taxon>Rhabditida</taxon>
        <taxon>Rhabditina</taxon>
        <taxon>Rhabditomorpha</taxon>
        <taxon>Rhabditoidea</taxon>
        <taxon>Rhabditidae</taxon>
        <taxon>Peloderinae</taxon>
        <taxon>Caenorhabditis</taxon>
    </lineage>
</organism>
<name>LSY2_CAEEL</name>
<reference evidence="7" key="1">
    <citation type="journal article" date="1998" name="Science">
        <title>Genome sequence of the nematode C. elegans: a platform for investigating biology.</title>
        <authorList>
            <consortium name="The C. elegans sequencing consortium"/>
        </authorList>
    </citation>
    <scope>NUCLEOTIDE SEQUENCE [LARGE SCALE GENOMIC DNA]</scope>
    <source>
        <strain evidence="7">Bristol N2</strain>
    </source>
</reference>
<reference evidence="6" key="2">
    <citation type="journal article" date="2005" name="Development">
        <title>A novel C. elegans zinc finger transcription factor, lsy-2, required for the cell type-specific expression of the lsy-6 microRNA.</title>
        <authorList>
            <person name="Johnston R.J. Jr."/>
            <person name="Hobert O."/>
        </authorList>
    </citation>
    <scope>FUNCTION</scope>
    <scope>SUBCELLULAR LOCATION</scope>
    <scope>DEVELOPMENTAL STAGE</scope>
    <scope>MUTAGENESIS OF 95-GLN--ILE-365 AND CYS-111</scope>
</reference>
<reference evidence="6" key="3">
    <citation type="journal article" date="2015" name="Protein Cell">
        <title>LSY-2 is essential for maintaining the germ-soma distinction in C. elegans.</title>
        <authorList>
            <person name="Lin L."/>
            <person name="Li Y."/>
            <person name="Yan L."/>
            <person name="Zhang G."/>
            <person name="Zhao Y."/>
            <person name="Zhang H."/>
        </authorList>
    </citation>
    <scope>FUNCTION</scope>
    <scope>DISRUPTION PHENOTYPE</scope>
    <scope>MUTAGENESIS OF 95-GLN--ILE-365</scope>
</reference>
<accession>Q9N5S3</accession>
<accession>Q4ZG90</accession>
<dbReference type="EMBL" id="BX284606">
    <property type="protein sequence ID" value="CCD71575.1"/>
    <property type="molecule type" value="Genomic_DNA"/>
</dbReference>
<dbReference type="EMBL" id="BX284606">
    <property type="protein sequence ID" value="CCD71576.1"/>
    <property type="molecule type" value="Genomic_DNA"/>
</dbReference>
<dbReference type="RefSeq" id="NP_001024696.1">
    <molecule id="Q9N5S3-1"/>
    <property type="nucleotide sequence ID" value="NM_001029525.5"/>
</dbReference>
<dbReference type="RefSeq" id="NP_001024697.1">
    <molecule id="Q9N5S3-2"/>
    <property type="nucleotide sequence ID" value="NM_001029526.4"/>
</dbReference>
<dbReference type="FunCoup" id="Q9N5S3">
    <property type="interactions" value="772"/>
</dbReference>
<dbReference type="IntAct" id="Q9N5S3">
    <property type="interactions" value="48"/>
</dbReference>
<dbReference type="STRING" id="6239.F49H12.1a.1"/>
<dbReference type="PaxDb" id="6239-F49H12.1a"/>
<dbReference type="EnsemblMetazoa" id="F49H12.1a.1">
    <molecule id="Q9N5S3-1"/>
    <property type="protein sequence ID" value="F49H12.1a.1"/>
    <property type="gene ID" value="WBGene00003087"/>
</dbReference>
<dbReference type="EnsemblMetazoa" id="F49H12.1b.1">
    <molecule id="Q9N5S3-2"/>
    <property type="protein sequence ID" value="F49H12.1b.1"/>
    <property type="gene ID" value="WBGene00003087"/>
</dbReference>
<dbReference type="GeneID" id="180522"/>
<dbReference type="KEGG" id="cel:CELE_F49H12.1"/>
<dbReference type="UCSC" id="F49H12.1a">
    <property type="organism name" value="c. elegans"/>
</dbReference>
<dbReference type="AGR" id="WB:WBGene00003087"/>
<dbReference type="CTD" id="180522"/>
<dbReference type="WormBase" id="F49H12.1a">
    <molecule id="Q9N5S3-1"/>
    <property type="protein sequence ID" value="CE28437"/>
    <property type="gene ID" value="WBGene00003087"/>
    <property type="gene designation" value="lsy-2"/>
</dbReference>
<dbReference type="WormBase" id="F49H12.1b">
    <molecule id="Q9N5S3-2"/>
    <property type="protein sequence ID" value="CE38521"/>
    <property type="gene ID" value="WBGene00003087"/>
    <property type="gene designation" value="lsy-2"/>
</dbReference>
<dbReference type="eggNOG" id="KOG1721">
    <property type="taxonomic scope" value="Eukaryota"/>
</dbReference>
<dbReference type="GeneTree" id="ENSGT00940000171158"/>
<dbReference type="HOGENOM" id="CLU_069900_0_0_1"/>
<dbReference type="InParanoid" id="Q9N5S3"/>
<dbReference type="OMA" id="MRMMEDQ"/>
<dbReference type="OrthoDB" id="654211at2759"/>
<dbReference type="PhylomeDB" id="Q9N5S3"/>
<dbReference type="PRO" id="PR:Q9N5S3"/>
<dbReference type="Proteomes" id="UP000001940">
    <property type="component" value="Chromosome X"/>
</dbReference>
<dbReference type="Bgee" id="WBGene00003087">
    <property type="expression patterns" value="Expressed in pharyngeal muscle cell (C elegans) and 4 other cell types or tissues"/>
</dbReference>
<dbReference type="ExpressionAtlas" id="Q9N5S3">
    <property type="expression patterns" value="baseline and differential"/>
</dbReference>
<dbReference type="GO" id="GO:0016607">
    <property type="term" value="C:nuclear speck"/>
    <property type="evidence" value="ECO:0007669"/>
    <property type="project" value="UniProtKB-SubCell"/>
</dbReference>
<dbReference type="GO" id="GO:0005634">
    <property type="term" value="C:nucleus"/>
    <property type="evidence" value="ECO:0000315"/>
    <property type="project" value="UniProtKB"/>
</dbReference>
<dbReference type="GO" id="GO:0008270">
    <property type="term" value="F:zinc ion binding"/>
    <property type="evidence" value="ECO:0007669"/>
    <property type="project" value="UniProtKB-KW"/>
</dbReference>
<dbReference type="GO" id="GO:0001708">
    <property type="term" value="P:cell fate specification"/>
    <property type="evidence" value="ECO:0000315"/>
    <property type="project" value="UniProtKB"/>
</dbReference>
<dbReference type="GO" id="GO:0002119">
    <property type="term" value="P:nematode larval development"/>
    <property type="evidence" value="ECO:0000315"/>
    <property type="project" value="UniProtKB"/>
</dbReference>
<dbReference type="GO" id="GO:0048665">
    <property type="term" value="P:neuron fate specification"/>
    <property type="evidence" value="ECO:0000315"/>
    <property type="project" value="UniProtKB"/>
</dbReference>
<dbReference type="GO" id="GO:0010628">
    <property type="term" value="P:positive regulation of gene expression"/>
    <property type="evidence" value="ECO:0000315"/>
    <property type="project" value="UniProtKB"/>
</dbReference>
<dbReference type="FunFam" id="3.30.160.60:FF:000065">
    <property type="entry name" value="B-cell CLL/lymphoma 6, member B"/>
    <property type="match status" value="1"/>
</dbReference>
<dbReference type="FunFam" id="3.30.160.60:FF:002484">
    <property type="entry name" value="Protein CBR-LSY-2"/>
    <property type="match status" value="1"/>
</dbReference>
<dbReference type="FunFam" id="3.30.160.60:FF:004055">
    <property type="entry name" value="Zinc finger imprinted 3"/>
    <property type="match status" value="1"/>
</dbReference>
<dbReference type="Gene3D" id="3.30.160.60">
    <property type="entry name" value="Classic Zinc Finger"/>
    <property type="match status" value="3"/>
</dbReference>
<dbReference type="InterPro" id="IPR036236">
    <property type="entry name" value="Znf_C2H2_sf"/>
</dbReference>
<dbReference type="InterPro" id="IPR013087">
    <property type="entry name" value="Znf_C2H2_type"/>
</dbReference>
<dbReference type="PANTHER" id="PTHR24381:SF393">
    <property type="entry name" value="CHROMATIN-LINKED ADAPTOR FOR MSL PROTEINS, ISOFORM B"/>
    <property type="match status" value="1"/>
</dbReference>
<dbReference type="PANTHER" id="PTHR24381">
    <property type="entry name" value="ZINC FINGER PROTEIN"/>
    <property type="match status" value="1"/>
</dbReference>
<dbReference type="Pfam" id="PF00096">
    <property type="entry name" value="zf-C2H2"/>
    <property type="match status" value="2"/>
</dbReference>
<dbReference type="Pfam" id="PF13912">
    <property type="entry name" value="zf-C2H2_6"/>
    <property type="match status" value="1"/>
</dbReference>
<dbReference type="SMART" id="SM00355">
    <property type="entry name" value="ZnF_C2H2"/>
    <property type="match status" value="5"/>
</dbReference>
<dbReference type="SUPFAM" id="SSF57667">
    <property type="entry name" value="beta-beta-alpha zinc fingers"/>
    <property type="match status" value="2"/>
</dbReference>
<dbReference type="PROSITE" id="PS00028">
    <property type="entry name" value="ZINC_FINGER_C2H2_1"/>
    <property type="match status" value="5"/>
</dbReference>
<dbReference type="PROSITE" id="PS50157">
    <property type="entry name" value="ZINC_FINGER_C2H2_2"/>
    <property type="match status" value="4"/>
</dbReference>
<keyword id="KW-0025">Alternative splicing</keyword>
<keyword id="KW-0479">Metal-binding</keyword>
<keyword id="KW-0539">Nucleus</keyword>
<keyword id="KW-1185">Reference proteome</keyword>
<keyword id="KW-0677">Repeat</keyword>
<keyword id="KW-0804">Transcription</keyword>
<keyword id="KW-0805">Transcription regulation</keyword>
<keyword id="KW-0862">Zinc</keyword>
<keyword id="KW-0863">Zinc-finger</keyword>
<evidence type="ECO:0000250" key="1">
    <source>
        <dbReference type="UniProtKB" id="Q9UQR1"/>
    </source>
</evidence>
<evidence type="ECO:0000255" key="2">
    <source>
        <dbReference type="PROSITE-ProRule" id="PRU00042"/>
    </source>
</evidence>
<evidence type="ECO:0000256" key="3">
    <source>
        <dbReference type="SAM" id="MobiDB-lite"/>
    </source>
</evidence>
<evidence type="ECO:0000269" key="4">
    <source>
    </source>
</evidence>
<evidence type="ECO:0000269" key="5">
    <source>
    </source>
</evidence>
<evidence type="ECO:0000305" key="6"/>
<evidence type="ECO:0000312" key="7">
    <source>
        <dbReference type="Proteomes" id="UP000001940"/>
    </source>
</evidence>
<evidence type="ECO:0000312" key="8">
    <source>
        <dbReference type="WormBase" id="F49H12.1a"/>
    </source>
</evidence>
<evidence type="ECO:0000312" key="9">
    <source>
        <dbReference type="WormBase" id="F49H12.1b"/>
    </source>
</evidence>
<sequence length="365" mass="42288">MLTRRNAKQSQRNSADQSLSEFNSSSMTHGSNQSVYHHNQHMDDSEMMMDEQDYSQYQMGFPEEDEMVEGMMTPRAVHQCNVCNKIFVSYKGLQQHAVIHTDQKPFRCDICSKSFRFKSNLFEHRSVHTGFTPHACPYCGKTCRLKGNLKKHLRTHVTTKEELEAAWRPFASNRRPPADIPDDAIVLRGAGGPYYTPPPRPKKKKLGLGEPEHWVDKLRRGDLLPQVELEDKIRRLEDTIFNNMSLERWGNLFEIAKSIAFETHDCPVCKSQFMTRMDCVSHHTLEHENHREGLEFFCEKCYRPFADEASYNQHMSYHTRVSSLIETGEIVPQPADPEILVPTNDEFQMLFGANFGQQMMEPQLI</sequence>
<proteinExistence type="evidence at protein level"/>
<comment type="function">
    <text evidence="1 4 5">Involved in transcriptional regulation (By similarity). Required to specify left-right asymmetry of the ASE gustatory neurons, probably acting upstream of microRNA lsy-6 (PubMed:16291785, PubMed:26050091). Involved in maintaining the distinction between somatic and germ cells, perhaps acting by repressing germ cell-specific genes in somatic cells (PubMed:26050091).</text>
</comment>
<comment type="subcellular location">
    <subcellularLocation>
        <location evidence="4">Nucleus speckle</location>
    </subcellularLocation>
    <text evidence="4">Localization in nuclear speckles/punctae is dynamic, appearing to move.</text>
</comment>
<comment type="alternative products">
    <event type="alternative splicing"/>
    <isoform>
        <id>Q9N5S3-1</id>
        <name evidence="8">a</name>
        <sequence type="displayed"/>
    </isoform>
    <isoform>
        <id>Q9N5S3-2</id>
        <name evidence="9">b</name>
        <sequence type="described" ref="VSP_061500"/>
    </isoform>
</comment>
<comment type="developmental stage">
    <text evidence="4">Expressed ubiquitously (PubMed:16291785). Earliest expression is at the 50-cell stage, and persists throughout embryogenesis, larval stages and adulthood (PubMed:16291785).</text>
</comment>
<comment type="disruption phenotype">
    <text evidence="5">RNAi-mediated knockdown causes ectopic expression of gcy-5 in the ASEL gustatory neuron.</text>
</comment>
<gene>
    <name evidence="8" type="primary">lsy-2</name>
    <name evidence="8" type="ORF">F49H12.1</name>
</gene>